<gene>
    <name type="ordered locus">GSU2818</name>
</gene>
<protein>
    <recommendedName>
        <fullName>UPF0324 membrane protein GSU2818</fullName>
    </recommendedName>
</protein>
<name>Y2818_GEOSL</name>
<feature type="chain" id="PRO_0000157419" description="UPF0324 membrane protein GSU2818">
    <location>
        <begin position="1"/>
        <end position="310"/>
    </location>
</feature>
<feature type="transmembrane region" description="Helical" evidence="1">
    <location>
        <begin position="11"/>
        <end position="33"/>
    </location>
</feature>
<feature type="transmembrane region" description="Helical" evidence="1">
    <location>
        <begin position="53"/>
        <end position="72"/>
    </location>
</feature>
<feature type="transmembrane region" description="Helical" evidence="1">
    <location>
        <begin position="79"/>
        <end position="97"/>
    </location>
</feature>
<feature type="transmembrane region" description="Helical" evidence="1">
    <location>
        <begin position="107"/>
        <end position="129"/>
    </location>
</feature>
<feature type="transmembrane region" description="Helical" evidence="1">
    <location>
        <begin position="136"/>
        <end position="158"/>
    </location>
</feature>
<feature type="transmembrane region" description="Helical" evidence="1">
    <location>
        <begin position="193"/>
        <end position="215"/>
    </location>
</feature>
<feature type="transmembrane region" description="Helical" evidence="1">
    <location>
        <begin position="227"/>
        <end position="244"/>
    </location>
</feature>
<feature type="transmembrane region" description="Helical" evidence="1">
    <location>
        <begin position="254"/>
        <end position="273"/>
    </location>
</feature>
<feature type="transmembrane region" description="Helical" evidence="1">
    <location>
        <begin position="286"/>
        <end position="308"/>
    </location>
</feature>
<organism>
    <name type="scientific">Geobacter sulfurreducens (strain ATCC 51573 / DSM 12127 / PCA)</name>
    <dbReference type="NCBI Taxonomy" id="243231"/>
    <lineage>
        <taxon>Bacteria</taxon>
        <taxon>Pseudomonadati</taxon>
        <taxon>Thermodesulfobacteriota</taxon>
        <taxon>Desulfuromonadia</taxon>
        <taxon>Geobacterales</taxon>
        <taxon>Geobacteraceae</taxon>
        <taxon>Geobacter</taxon>
    </lineage>
</organism>
<evidence type="ECO:0000255" key="1"/>
<evidence type="ECO:0000305" key="2"/>
<comment type="subcellular location">
    <subcellularLocation>
        <location evidence="2">Cell membrane</location>
        <topology evidence="2">Multi-pass membrane protein</topology>
    </subcellularLocation>
</comment>
<comment type="similarity">
    <text evidence="2">Belongs to the UPF0324 family.</text>
</comment>
<dbReference type="EMBL" id="AE017180">
    <property type="protein sequence ID" value="AAR36212.2"/>
    <property type="molecule type" value="Genomic_DNA"/>
</dbReference>
<dbReference type="RefSeq" id="NP_953862.2">
    <property type="nucleotide sequence ID" value="NC_002939.5"/>
</dbReference>
<dbReference type="RefSeq" id="WP_010943444.1">
    <property type="nucleotide sequence ID" value="NC_002939.5"/>
</dbReference>
<dbReference type="FunCoup" id="Q749C5">
    <property type="interactions" value="95"/>
</dbReference>
<dbReference type="STRING" id="243231.GSU2818"/>
<dbReference type="EnsemblBacteria" id="AAR36212">
    <property type="protein sequence ID" value="AAR36212"/>
    <property type="gene ID" value="GSU2818"/>
</dbReference>
<dbReference type="KEGG" id="gsu:GSU2818"/>
<dbReference type="PATRIC" id="fig|243231.5.peg.2841"/>
<dbReference type="eggNOG" id="COG2855">
    <property type="taxonomic scope" value="Bacteria"/>
</dbReference>
<dbReference type="HOGENOM" id="CLU_033541_2_0_7"/>
<dbReference type="InParanoid" id="Q749C5"/>
<dbReference type="OrthoDB" id="5393513at2"/>
<dbReference type="Proteomes" id="UP000000577">
    <property type="component" value="Chromosome"/>
</dbReference>
<dbReference type="GO" id="GO:0005886">
    <property type="term" value="C:plasma membrane"/>
    <property type="evidence" value="ECO:0000318"/>
    <property type="project" value="GO_Central"/>
</dbReference>
<dbReference type="InterPro" id="IPR018383">
    <property type="entry name" value="UPF0324_pro"/>
</dbReference>
<dbReference type="PANTHER" id="PTHR30106">
    <property type="entry name" value="INNER MEMBRANE PROTEIN YEIH-RELATED"/>
    <property type="match status" value="1"/>
</dbReference>
<dbReference type="PANTHER" id="PTHR30106:SF1">
    <property type="entry name" value="UPF0324 MEMBRANE PROTEIN FN0533"/>
    <property type="match status" value="1"/>
</dbReference>
<dbReference type="Pfam" id="PF03601">
    <property type="entry name" value="Cons_hypoth698"/>
    <property type="match status" value="1"/>
</dbReference>
<accession>Q749C5</accession>
<sequence length="310" mass="32335">MNGSNLRRGTFTILLALCATPWVGTAQALVMGIALGLLQANPWPRQTARYSKMLLQASVVGLGFGLSLGEVIQTGKDSIWYSVIGISCTLLVGYGLGKLFKTGTNTSALISFGTAICGGSAIAAMAPVLKAKSDETAVALATVFTLNSAALLLFPLVGHWLQLDQNTFGVWSGLAIHDTSSVVGATSAYGATALAIGTTVKLTRAIWIAPVVMAASLIKGGEQQARIPLFIIGFLGAAAIRTLLPSYEHFWGELAGVAKQCLVVTLFLVGAGLSREVVKQVGIRPLVQAVSLWVLVSALTLVALKLPWSA</sequence>
<proteinExistence type="inferred from homology"/>
<keyword id="KW-1003">Cell membrane</keyword>
<keyword id="KW-0472">Membrane</keyword>
<keyword id="KW-1185">Reference proteome</keyword>
<keyword id="KW-0812">Transmembrane</keyword>
<keyword id="KW-1133">Transmembrane helix</keyword>
<reference key="1">
    <citation type="journal article" date="2003" name="Science">
        <title>Genome of Geobacter sulfurreducens: metal reduction in subsurface environments.</title>
        <authorList>
            <person name="Methe B.A."/>
            <person name="Nelson K.E."/>
            <person name="Eisen J.A."/>
            <person name="Paulsen I.T."/>
            <person name="Nelson W.C."/>
            <person name="Heidelberg J.F."/>
            <person name="Wu D."/>
            <person name="Wu M."/>
            <person name="Ward N.L."/>
            <person name="Beanan M.J."/>
            <person name="Dodson R.J."/>
            <person name="Madupu R."/>
            <person name="Brinkac L.M."/>
            <person name="Daugherty S.C."/>
            <person name="DeBoy R.T."/>
            <person name="Durkin A.S."/>
            <person name="Gwinn M.L."/>
            <person name="Kolonay J.F."/>
            <person name="Sullivan S.A."/>
            <person name="Haft D.H."/>
            <person name="Selengut J."/>
            <person name="Davidsen T.M."/>
            <person name="Zafar N."/>
            <person name="White O."/>
            <person name="Tran B."/>
            <person name="Romero C."/>
            <person name="Forberger H.A."/>
            <person name="Weidman J.F."/>
            <person name="Khouri H.M."/>
            <person name="Feldblyum T.V."/>
            <person name="Utterback T.R."/>
            <person name="Van Aken S.E."/>
            <person name="Lovley D.R."/>
            <person name="Fraser C.M."/>
        </authorList>
    </citation>
    <scope>NUCLEOTIDE SEQUENCE [LARGE SCALE GENOMIC DNA]</scope>
    <source>
        <strain>ATCC 51573 / DSM 12127 / PCA</strain>
    </source>
</reference>